<organism>
    <name type="scientific">Staphylococcus aureus (strain COL)</name>
    <dbReference type="NCBI Taxonomy" id="93062"/>
    <lineage>
        <taxon>Bacteria</taxon>
        <taxon>Bacillati</taxon>
        <taxon>Bacillota</taxon>
        <taxon>Bacilli</taxon>
        <taxon>Bacillales</taxon>
        <taxon>Staphylococcaceae</taxon>
        <taxon>Staphylococcus</taxon>
    </lineage>
</organism>
<sequence length="255" mass="28513">MTLTIKEVTQLINAVNTIEELENHECFLDERKGVQNAIARRRKALEKEQALKEKYVEMTYFENEILKEHPNAIICGIDEVGRGPLAGPVVACATILNSNHNYLGLDDSKKVPVTKRLELNEALKNEVTAFAYGIATAEEIDEFNIYKATQIAMQRAIDGLSVQPTHLLIDAMTLDNALPQVSLIKGDARSVSIAAASIMAKVFRDDYMTQLSKDYPEYGFEKNAGYGTKQHLLAIDDIGIMKEHRKSFEPIKSLL</sequence>
<comment type="function">
    <text evidence="1">Endonuclease that specifically degrades the RNA of RNA-DNA hybrids.</text>
</comment>
<comment type="catalytic activity">
    <reaction evidence="1">
        <text>Endonucleolytic cleavage to 5'-phosphomonoester.</text>
        <dbReference type="EC" id="3.1.26.4"/>
    </reaction>
</comment>
<comment type="cofactor">
    <cofactor evidence="1">
        <name>Mn(2+)</name>
        <dbReference type="ChEBI" id="CHEBI:29035"/>
    </cofactor>
    <cofactor evidence="1">
        <name>Mg(2+)</name>
        <dbReference type="ChEBI" id="CHEBI:18420"/>
    </cofactor>
    <text evidence="1">Manganese or magnesium. Binds 1 divalent metal ion per monomer in the absence of substrate. May bind a second metal ion after substrate binding.</text>
</comment>
<comment type="subcellular location">
    <subcellularLocation>
        <location evidence="1">Cytoplasm</location>
    </subcellularLocation>
</comment>
<comment type="similarity">
    <text evidence="1">Belongs to the RNase HII family.</text>
</comment>
<dbReference type="EC" id="3.1.26.4" evidence="1"/>
<dbReference type="EMBL" id="CP000046">
    <property type="protein sequence ID" value="AAW38093.1"/>
    <property type="molecule type" value="Genomic_DNA"/>
</dbReference>
<dbReference type="RefSeq" id="WP_000176394.1">
    <property type="nucleotide sequence ID" value="NZ_JBGOFO010000002.1"/>
</dbReference>
<dbReference type="SMR" id="Q5HGI8"/>
<dbReference type="KEGG" id="sac:SACOL1261"/>
<dbReference type="HOGENOM" id="CLU_036532_2_1_9"/>
<dbReference type="Proteomes" id="UP000000530">
    <property type="component" value="Chromosome"/>
</dbReference>
<dbReference type="GO" id="GO:0005737">
    <property type="term" value="C:cytoplasm"/>
    <property type="evidence" value="ECO:0007669"/>
    <property type="project" value="UniProtKB-SubCell"/>
</dbReference>
<dbReference type="GO" id="GO:0032299">
    <property type="term" value="C:ribonuclease H2 complex"/>
    <property type="evidence" value="ECO:0007669"/>
    <property type="project" value="TreeGrafter"/>
</dbReference>
<dbReference type="GO" id="GO:0030145">
    <property type="term" value="F:manganese ion binding"/>
    <property type="evidence" value="ECO:0007669"/>
    <property type="project" value="UniProtKB-UniRule"/>
</dbReference>
<dbReference type="GO" id="GO:0003723">
    <property type="term" value="F:RNA binding"/>
    <property type="evidence" value="ECO:0007669"/>
    <property type="project" value="InterPro"/>
</dbReference>
<dbReference type="GO" id="GO:0004523">
    <property type="term" value="F:RNA-DNA hybrid ribonuclease activity"/>
    <property type="evidence" value="ECO:0007669"/>
    <property type="project" value="UniProtKB-UniRule"/>
</dbReference>
<dbReference type="GO" id="GO:0043137">
    <property type="term" value="P:DNA replication, removal of RNA primer"/>
    <property type="evidence" value="ECO:0007669"/>
    <property type="project" value="TreeGrafter"/>
</dbReference>
<dbReference type="GO" id="GO:0006298">
    <property type="term" value="P:mismatch repair"/>
    <property type="evidence" value="ECO:0007669"/>
    <property type="project" value="TreeGrafter"/>
</dbReference>
<dbReference type="CDD" id="cd07182">
    <property type="entry name" value="RNase_HII_bacteria_HII_like"/>
    <property type="match status" value="1"/>
</dbReference>
<dbReference type="FunFam" id="3.30.420.10:FF:000006">
    <property type="entry name" value="Ribonuclease HII"/>
    <property type="match status" value="1"/>
</dbReference>
<dbReference type="Gene3D" id="3.30.420.10">
    <property type="entry name" value="Ribonuclease H-like superfamily/Ribonuclease H"/>
    <property type="match status" value="1"/>
</dbReference>
<dbReference type="HAMAP" id="MF_00052_B">
    <property type="entry name" value="RNase_HII_B"/>
    <property type="match status" value="1"/>
</dbReference>
<dbReference type="InterPro" id="IPR022898">
    <property type="entry name" value="RNase_HII"/>
</dbReference>
<dbReference type="InterPro" id="IPR001352">
    <property type="entry name" value="RNase_HII/HIII"/>
</dbReference>
<dbReference type="InterPro" id="IPR024567">
    <property type="entry name" value="RNase_HII/HIII_dom"/>
</dbReference>
<dbReference type="InterPro" id="IPR012337">
    <property type="entry name" value="RNaseH-like_sf"/>
</dbReference>
<dbReference type="InterPro" id="IPR036397">
    <property type="entry name" value="RNaseH_sf"/>
</dbReference>
<dbReference type="NCBIfam" id="NF000594">
    <property type="entry name" value="PRK00015.1-1"/>
    <property type="match status" value="1"/>
</dbReference>
<dbReference type="NCBIfam" id="NF000595">
    <property type="entry name" value="PRK00015.1-3"/>
    <property type="match status" value="1"/>
</dbReference>
<dbReference type="PANTHER" id="PTHR10954">
    <property type="entry name" value="RIBONUCLEASE H2 SUBUNIT A"/>
    <property type="match status" value="1"/>
</dbReference>
<dbReference type="PANTHER" id="PTHR10954:SF18">
    <property type="entry name" value="RIBONUCLEASE HII"/>
    <property type="match status" value="1"/>
</dbReference>
<dbReference type="Pfam" id="PF01351">
    <property type="entry name" value="RNase_HII"/>
    <property type="match status" value="1"/>
</dbReference>
<dbReference type="SUPFAM" id="SSF53098">
    <property type="entry name" value="Ribonuclease H-like"/>
    <property type="match status" value="1"/>
</dbReference>
<dbReference type="PROSITE" id="PS51975">
    <property type="entry name" value="RNASE_H_2"/>
    <property type="match status" value="1"/>
</dbReference>
<name>RNH2_STAAC</name>
<keyword id="KW-0963">Cytoplasm</keyword>
<keyword id="KW-0255">Endonuclease</keyword>
<keyword id="KW-0378">Hydrolase</keyword>
<keyword id="KW-0464">Manganese</keyword>
<keyword id="KW-0479">Metal-binding</keyword>
<keyword id="KW-0540">Nuclease</keyword>
<protein>
    <recommendedName>
        <fullName evidence="1">Ribonuclease HII</fullName>
        <shortName evidence="1">RNase HII</shortName>
        <ecNumber evidence="1">3.1.26.4</ecNumber>
    </recommendedName>
</protein>
<gene>
    <name evidence="1" type="primary">rnhB</name>
    <name type="ordered locus">SACOL1261</name>
</gene>
<accession>Q5HGI8</accession>
<reference key="1">
    <citation type="journal article" date="2005" name="J. Bacteriol.">
        <title>Insights on evolution of virulence and resistance from the complete genome analysis of an early methicillin-resistant Staphylococcus aureus strain and a biofilm-producing methicillin-resistant Staphylococcus epidermidis strain.</title>
        <authorList>
            <person name="Gill S.R."/>
            <person name="Fouts D.E."/>
            <person name="Archer G.L."/>
            <person name="Mongodin E.F."/>
            <person name="DeBoy R.T."/>
            <person name="Ravel J."/>
            <person name="Paulsen I.T."/>
            <person name="Kolonay J.F."/>
            <person name="Brinkac L.M."/>
            <person name="Beanan M.J."/>
            <person name="Dodson R.J."/>
            <person name="Daugherty S.C."/>
            <person name="Madupu R."/>
            <person name="Angiuoli S.V."/>
            <person name="Durkin A.S."/>
            <person name="Haft D.H."/>
            <person name="Vamathevan J.J."/>
            <person name="Khouri H."/>
            <person name="Utterback T.R."/>
            <person name="Lee C."/>
            <person name="Dimitrov G."/>
            <person name="Jiang L."/>
            <person name="Qin H."/>
            <person name="Weidman J."/>
            <person name="Tran K."/>
            <person name="Kang K.H."/>
            <person name="Hance I.R."/>
            <person name="Nelson K.E."/>
            <person name="Fraser C.M."/>
        </authorList>
    </citation>
    <scope>NUCLEOTIDE SEQUENCE [LARGE SCALE GENOMIC DNA]</scope>
    <source>
        <strain>COL</strain>
    </source>
</reference>
<evidence type="ECO:0000255" key="1">
    <source>
        <dbReference type="HAMAP-Rule" id="MF_00052"/>
    </source>
</evidence>
<evidence type="ECO:0000255" key="2">
    <source>
        <dbReference type="PROSITE-ProRule" id="PRU01319"/>
    </source>
</evidence>
<proteinExistence type="inferred from homology"/>
<feature type="chain" id="PRO_0000111621" description="Ribonuclease HII">
    <location>
        <begin position="1"/>
        <end position="255"/>
    </location>
</feature>
<feature type="domain" description="RNase H type-2" evidence="2">
    <location>
        <begin position="72"/>
        <end position="255"/>
    </location>
</feature>
<feature type="binding site" evidence="1">
    <location>
        <position position="78"/>
    </location>
    <ligand>
        <name>a divalent metal cation</name>
        <dbReference type="ChEBI" id="CHEBI:60240"/>
    </ligand>
</feature>
<feature type="binding site" evidence="1">
    <location>
        <position position="79"/>
    </location>
    <ligand>
        <name>a divalent metal cation</name>
        <dbReference type="ChEBI" id="CHEBI:60240"/>
    </ligand>
</feature>
<feature type="binding site" evidence="1">
    <location>
        <position position="170"/>
    </location>
    <ligand>
        <name>a divalent metal cation</name>
        <dbReference type="ChEBI" id="CHEBI:60240"/>
    </ligand>
</feature>